<gene>
    <name evidence="1" type="primary">gatC</name>
    <name type="ordered locus">SAR11_1078</name>
</gene>
<comment type="function">
    <text evidence="1">Allows the formation of correctly charged Asn-tRNA(Asn) or Gln-tRNA(Gln) through the transamidation of misacylated Asp-tRNA(Asn) or Glu-tRNA(Gln) in organisms which lack either or both of asparaginyl-tRNA or glutaminyl-tRNA synthetases. The reaction takes place in the presence of glutamine and ATP through an activated phospho-Asp-tRNA(Asn) or phospho-Glu-tRNA(Gln).</text>
</comment>
<comment type="catalytic activity">
    <reaction evidence="1">
        <text>L-glutamyl-tRNA(Gln) + L-glutamine + ATP + H2O = L-glutaminyl-tRNA(Gln) + L-glutamate + ADP + phosphate + H(+)</text>
        <dbReference type="Rhea" id="RHEA:17521"/>
        <dbReference type="Rhea" id="RHEA-COMP:9681"/>
        <dbReference type="Rhea" id="RHEA-COMP:9684"/>
        <dbReference type="ChEBI" id="CHEBI:15377"/>
        <dbReference type="ChEBI" id="CHEBI:15378"/>
        <dbReference type="ChEBI" id="CHEBI:29985"/>
        <dbReference type="ChEBI" id="CHEBI:30616"/>
        <dbReference type="ChEBI" id="CHEBI:43474"/>
        <dbReference type="ChEBI" id="CHEBI:58359"/>
        <dbReference type="ChEBI" id="CHEBI:78520"/>
        <dbReference type="ChEBI" id="CHEBI:78521"/>
        <dbReference type="ChEBI" id="CHEBI:456216"/>
    </reaction>
</comment>
<comment type="catalytic activity">
    <reaction evidence="1">
        <text>L-aspartyl-tRNA(Asn) + L-glutamine + ATP + H2O = L-asparaginyl-tRNA(Asn) + L-glutamate + ADP + phosphate + 2 H(+)</text>
        <dbReference type="Rhea" id="RHEA:14513"/>
        <dbReference type="Rhea" id="RHEA-COMP:9674"/>
        <dbReference type="Rhea" id="RHEA-COMP:9677"/>
        <dbReference type="ChEBI" id="CHEBI:15377"/>
        <dbReference type="ChEBI" id="CHEBI:15378"/>
        <dbReference type="ChEBI" id="CHEBI:29985"/>
        <dbReference type="ChEBI" id="CHEBI:30616"/>
        <dbReference type="ChEBI" id="CHEBI:43474"/>
        <dbReference type="ChEBI" id="CHEBI:58359"/>
        <dbReference type="ChEBI" id="CHEBI:78515"/>
        <dbReference type="ChEBI" id="CHEBI:78516"/>
        <dbReference type="ChEBI" id="CHEBI:456216"/>
    </reaction>
</comment>
<comment type="subunit">
    <text evidence="1">Heterotrimer of A, B and C subunits.</text>
</comment>
<comment type="similarity">
    <text evidence="1">Belongs to the GatC family.</text>
</comment>
<organism>
    <name type="scientific">Pelagibacter ubique (strain HTCC1062)</name>
    <dbReference type="NCBI Taxonomy" id="335992"/>
    <lineage>
        <taxon>Bacteria</taxon>
        <taxon>Pseudomonadati</taxon>
        <taxon>Pseudomonadota</taxon>
        <taxon>Alphaproteobacteria</taxon>
        <taxon>Candidatus Pelagibacterales</taxon>
        <taxon>Candidatus Pelagibacteraceae</taxon>
        <taxon>Candidatus Pelagibacter</taxon>
    </lineage>
</organism>
<name>GATC_PELUB</name>
<proteinExistence type="inferred from homology"/>
<reference key="1">
    <citation type="journal article" date="2005" name="Science">
        <title>Genome streamlining in a cosmopolitan oceanic bacterium.</title>
        <authorList>
            <person name="Giovannoni S.J."/>
            <person name="Tripp H.J."/>
            <person name="Givan S."/>
            <person name="Podar M."/>
            <person name="Vergin K.L."/>
            <person name="Baptista D."/>
            <person name="Bibbs L."/>
            <person name="Eads J."/>
            <person name="Richardson T.H."/>
            <person name="Noordewier M."/>
            <person name="Rappe M.S."/>
            <person name="Short J.M."/>
            <person name="Carrington J.C."/>
            <person name="Mathur E.J."/>
        </authorList>
    </citation>
    <scope>NUCLEOTIDE SEQUENCE [LARGE SCALE GENOMIC DNA]</scope>
    <source>
        <strain>HTCC1062</strain>
    </source>
</reference>
<feature type="chain" id="PRO_1000016168" description="Aspartyl/glutamyl-tRNA(Asn/Gln) amidotransferase subunit C">
    <location>
        <begin position="1"/>
        <end position="95"/>
    </location>
</feature>
<keyword id="KW-0067">ATP-binding</keyword>
<keyword id="KW-0436">Ligase</keyword>
<keyword id="KW-0547">Nucleotide-binding</keyword>
<keyword id="KW-0648">Protein biosynthesis</keyword>
<keyword id="KW-1185">Reference proteome</keyword>
<dbReference type="EC" id="6.3.5.-" evidence="1"/>
<dbReference type="EMBL" id="CP000084">
    <property type="protein sequence ID" value="AAZ21882.1"/>
    <property type="molecule type" value="Genomic_DNA"/>
</dbReference>
<dbReference type="RefSeq" id="WP_006996849.1">
    <property type="nucleotide sequence ID" value="NC_007205.1"/>
</dbReference>
<dbReference type="SMR" id="Q4FLQ6"/>
<dbReference type="STRING" id="335992.SAR11_1078"/>
<dbReference type="GeneID" id="66295568"/>
<dbReference type="KEGG" id="pub:SAR11_1078"/>
<dbReference type="eggNOG" id="COG0721">
    <property type="taxonomic scope" value="Bacteria"/>
</dbReference>
<dbReference type="HOGENOM" id="CLU_105899_2_1_5"/>
<dbReference type="OrthoDB" id="9794326at2"/>
<dbReference type="Proteomes" id="UP000002528">
    <property type="component" value="Chromosome"/>
</dbReference>
<dbReference type="GO" id="GO:0050566">
    <property type="term" value="F:asparaginyl-tRNA synthase (glutamine-hydrolyzing) activity"/>
    <property type="evidence" value="ECO:0007669"/>
    <property type="project" value="RHEA"/>
</dbReference>
<dbReference type="GO" id="GO:0005524">
    <property type="term" value="F:ATP binding"/>
    <property type="evidence" value="ECO:0007669"/>
    <property type="project" value="UniProtKB-KW"/>
</dbReference>
<dbReference type="GO" id="GO:0050567">
    <property type="term" value="F:glutaminyl-tRNA synthase (glutamine-hydrolyzing) activity"/>
    <property type="evidence" value="ECO:0007669"/>
    <property type="project" value="UniProtKB-UniRule"/>
</dbReference>
<dbReference type="GO" id="GO:0070681">
    <property type="term" value="P:glutaminyl-tRNAGln biosynthesis via transamidation"/>
    <property type="evidence" value="ECO:0007669"/>
    <property type="project" value="TreeGrafter"/>
</dbReference>
<dbReference type="GO" id="GO:0006450">
    <property type="term" value="P:regulation of translational fidelity"/>
    <property type="evidence" value="ECO:0007669"/>
    <property type="project" value="InterPro"/>
</dbReference>
<dbReference type="GO" id="GO:0006412">
    <property type="term" value="P:translation"/>
    <property type="evidence" value="ECO:0007669"/>
    <property type="project" value="UniProtKB-UniRule"/>
</dbReference>
<dbReference type="Gene3D" id="1.10.20.60">
    <property type="entry name" value="Glu-tRNAGln amidotransferase C subunit, N-terminal domain"/>
    <property type="match status" value="1"/>
</dbReference>
<dbReference type="HAMAP" id="MF_00122">
    <property type="entry name" value="GatC"/>
    <property type="match status" value="1"/>
</dbReference>
<dbReference type="InterPro" id="IPR036113">
    <property type="entry name" value="Asp/Glu-ADT_sf_sub_c"/>
</dbReference>
<dbReference type="InterPro" id="IPR003837">
    <property type="entry name" value="GatC"/>
</dbReference>
<dbReference type="NCBIfam" id="TIGR00135">
    <property type="entry name" value="gatC"/>
    <property type="match status" value="1"/>
</dbReference>
<dbReference type="PANTHER" id="PTHR15004">
    <property type="entry name" value="GLUTAMYL-TRNA(GLN) AMIDOTRANSFERASE SUBUNIT C, MITOCHONDRIAL"/>
    <property type="match status" value="1"/>
</dbReference>
<dbReference type="PANTHER" id="PTHR15004:SF0">
    <property type="entry name" value="GLUTAMYL-TRNA(GLN) AMIDOTRANSFERASE SUBUNIT C, MITOCHONDRIAL"/>
    <property type="match status" value="1"/>
</dbReference>
<dbReference type="Pfam" id="PF02686">
    <property type="entry name" value="GatC"/>
    <property type="match status" value="1"/>
</dbReference>
<dbReference type="SUPFAM" id="SSF141000">
    <property type="entry name" value="Glu-tRNAGln amidotransferase C subunit"/>
    <property type="match status" value="1"/>
</dbReference>
<evidence type="ECO:0000255" key="1">
    <source>
        <dbReference type="HAMAP-Rule" id="MF_00122"/>
    </source>
</evidence>
<accession>Q4FLQ6</accession>
<protein>
    <recommendedName>
        <fullName evidence="1">Aspartyl/glutamyl-tRNA(Asn/Gln) amidotransferase subunit C</fullName>
        <shortName evidence="1">Asp/Glu-ADT subunit C</shortName>
        <ecNumber evidence="1">6.3.5.-</ecNumber>
    </recommendedName>
</protein>
<sequence>MTIDLKTIKHISKLSRISVDDAKANKLAGDLNSIFDFIEKLNELNTDNIEPLTSVAETTLKLRADEVKSENIRDQILKNSPEENEDFFVVPRVVE</sequence>